<feature type="chain" id="PRO_0000046829" description="pH-response transcription factor pacC/RIM101">
    <location>
        <begin position="1" status="less than"/>
        <end position="71" status="greater than"/>
    </location>
</feature>
<feature type="zinc finger region" description="C2H2-type 1" evidence="2">
    <location>
        <begin position="16"/>
        <end position="40"/>
    </location>
</feature>
<feature type="zinc finger region" description="C2H2-type 2" evidence="2">
    <location>
        <begin position="46"/>
        <end position="68"/>
    </location>
</feature>
<feature type="non-terminal residue">
    <location>
        <position position="1"/>
    </location>
</feature>
<feature type="non-terminal residue">
    <location>
        <position position="71"/>
    </location>
</feature>
<protein>
    <recommendedName>
        <fullName>pH-response transcription factor pacC/RIM101</fullName>
    </recommendedName>
</protein>
<name>PACC_COLSU</name>
<gene>
    <name type="primary">pacC</name>
</gene>
<proteinExistence type="inferred from homology"/>
<sequence>VCERHVGRKSTNNLNLTCQWGSCRTTTVKRDHITSHIRVHVPLKPHKCDFCGKAFKRPQDLKKHVKTHADD</sequence>
<keyword id="KW-0010">Activator</keyword>
<keyword id="KW-0238">DNA-binding</keyword>
<keyword id="KW-0479">Metal-binding</keyword>
<keyword id="KW-0539">Nucleus</keyword>
<keyword id="KW-0677">Repeat</keyword>
<keyword id="KW-0678">Repressor</keyword>
<keyword id="KW-0804">Transcription</keyword>
<keyword id="KW-0805">Transcription regulation</keyword>
<keyword id="KW-0862">Zinc</keyword>
<keyword id="KW-0863">Zinc-finger</keyword>
<comment type="function">
    <text evidence="1">Transcription factor that mediates regulation of both acid- and alkaline-expressed genes in response to ambient pH. At alkaline ambient pH, activates transcription of alkaline-expressed genes (including pacC itself) and represses transcription of acid-expressed genes (By similarity).</text>
</comment>
<comment type="subcellular location">
    <subcellularLocation>
        <location evidence="3">Nucleus</location>
    </subcellularLocation>
</comment>
<comment type="similarity">
    <text evidence="3">Belongs to the pacC/RIM101 family.</text>
</comment>
<dbReference type="EMBL" id="AF260325">
    <property type="protein sequence ID" value="AAF70317.1"/>
    <property type="molecule type" value="Genomic_DNA"/>
</dbReference>
<dbReference type="SMR" id="Q9P8G9"/>
<dbReference type="eggNOG" id="KOG1721">
    <property type="taxonomic scope" value="Eukaryota"/>
</dbReference>
<dbReference type="GO" id="GO:0005634">
    <property type="term" value="C:nucleus"/>
    <property type="evidence" value="ECO:0007669"/>
    <property type="project" value="UniProtKB-SubCell"/>
</dbReference>
<dbReference type="GO" id="GO:0003677">
    <property type="term" value="F:DNA binding"/>
    <property type="evidence" value="ECO:0007669"/>
    <property type="project" value="UniProtKB-KW"/>
</dbReference>
<dbReference type="GO" id="GO:0008270">
    <property type="term" value="F:zinc ion binding"/>
    <property type="evidence" value="ECO:0007669"/>
    <property type="project" value="UniProtKB-KW"/>
</dbReference>
<dbReference type="GO" id="GO:0045944">
    <property type="term" value="P:positive regulation of transcription by RNA polymerase II"/>
    <property type="evidence" value="ECO:0007669"/>
    <property type="project" value="TreeGrafter"/>
</dbReference>
<dbReference type="FunFam" id="3.30.160.60:FF:000993">
    <property type="entry name" value="pH-response transcription factor pacC/RIM101"/>
    <property type="match status" value="1"/>
</dbReference>
<dbReference type="Gene3D" id="3.30.160.60">
    <property type="entry name" value="Classic Zinc Finger"/>
    <property type="match status" value="1"/>
</dbReference>
<dbReference type="InterPro" id="IPR050806">
    <property type="entry name" value="pacC/RIM101"/>
</dbReference>
<dbReference type="InterPro" id="IPR036236">
    <property type="entry name" value="Znf_C2H2_sf"/>
</dbReference>
<dbReference type="InterPro" id="IPR013087">
    <property type="entry name" value="Znf_C2H2_type"/>
</dbReference>
<dbReference type="PANTHER" id="PTHR47257">
    <property type="entry name" value="PH-RESPONSE TRANSCRIPTION FACTOR PACC/RIM101"/>
    <property type="match status" value="1"/>
</dbReference>
<dbReference type="PANTHER" id="PTHR47257:SF1">
    <property type="entry name" value="PH-RESPONSE TRANSCRIPTION FACTOR PACC_RIM101"/>
    <property type="match status" value="1"/>
</dbReference>
<dbReference type="Pfam" id="PF00096">
    <property type="entry name" value="zf-C2H2"/>
    <property type="match status" value="1"/>
</dbReference>
<dbReference type="SMART" id="SM00355">
    <property type="entry name" value="ZnF_C2H2"/>
    <property type="match status" value="2"/>
</dbReference>
<dbReference type="SUPFAM" id="SSF57667">
    <property type="entry name" value="beta-beta-alpha zinc fingers"/>
    <property type="match status" value="1"/>
</dbReference>
<dbReference type="PROSITE" id="PS00028">
    <property type="entry name" value="ZINC_FINGER_C2H2_1"/>
    <property type="match status" value="1"/>
</dbReference>
<dbReference type="PROSITE" id="PS50157">
    <property type="entry name" value="ZINC_FINGER_C2H2_2"/>
    <property type="match status" value="2"/>
</dbReference>
<evidence type="ECO:0000250" key="1"/>
<evidence type="ECO:0000255" key="2">
    <source>
        <dbReference type="PROSITE-ProRule" id="PRU00042"/>
    </source>
</evidence>
<evidence type="ECO:0000305" key="3"/>
<accession>Q9P8G9</accession>
<reference key="1">
    <citation type="submission" date="2000-04" db="EMBL/GenBank/DDBJ databases">
        <title>Ambient pH-regulated enzyme secretion in endophytic and pathogenic isolates of the fungus Colletotrichum (teleomorph, Glomerella).</title>
        <authorList>
            <person name="Maccheroni W. Jr."/>
            <person name="Azevedo J.L."/>
        </authorList>
    </citation>
    <scope>NUCLEOTIDE SEQUENCE [GENOMIC DNA]</scope>
</reference>
<organism>
    <name type="scientific">Colletotrichum sublineola</name>
    <name type="common">Sorghum anthracnose fungus</name>
    <dbReference type="NCBI Taxonomy" id="1173701"/>
    <lineage>
        <taxon>Eukaryota</taxon>
        <taxon>Fungi</taxon>
        <taxon>Dikarya</taxon>
        <taxon>Ascomycota</taxon>
        <taxon>Pezizomycotina</taxon>
        <taxon>Sordariomycetes</taxon>
        <taxon>Hypocreomycetidae</taxon>
        <taxon>Glomerellales</taxon>
        <taxon>Glomerellaceae</taxon>
        <taxon>Colletotrichum</taxon>
        <taxon>Colletotrichum graminicola species complex</taxon>
    </lineage>
</organism>